<reference key="1">
    <citation type="journal article" date="2008" name="J. Bacteriol.">
        <title>The pangenome structure of Escherichia coli: comparative genomic analysis of E. coli commensal and pathogenic isolates.</title>
        <authorList>
            <person name="Rasko D.A."/>
            <person name="Rosovitz M.J."/>
            <person name="Myers G.S.A."/>
            <person name="Mongodin E.F."/>
            <person name="Fricke W.F."/>
            <person name="Gajer P."/>
            <person name="Crabtree J."/>
            <person name="Sebaihia M."/>
            <person name="Thomson N.R."/>
            <person name="Chaudhuri R."/>
            <person name="Henderson I.R."/>
            <person name="Sperandio V."/>
            <person name="Ravel J."/>
        </authorList>
    </citation>
    <scope>NUCLEOTIDE SEQUENCE [LARGE SCALE GENOMIC DNA]</scope>
    <source>
        <strain>HS</strain>
    </source>
</reference>
<evidence type="ECO:0000255" key="1">
    <source>
        <dbReference type="HAMAP-Rule" id="MF_00612"/>
    </source>
</evidence>
<proteinExistence type="inferred from homology"/>
<sequence>MSQLCPCGSAVEYSLCCHPYVSGEKVAPDPEHLMRSRYCAFVMQDADYLIKTWHPSCGAAALRAELIAGFAHTEWLGLTVFEHCWQDADNIGFVSFVARFTEGGKTGAIIERSRFLKENGQWYYIDGTRPQFGRNDPCPCGSGKKFKKCCGQ</sequence>
<organism>
    <name type="scientific">Escherichia coli O9:H4 (strain HS)</name>
    <dbReference type="NCBI Taxonomy" id="331112"/>
    <lineage>
        <taxon>Bacteria</taxon>
        <taxon>Pseudomonadati</taxon>
        <taxon>Pseudomonadota</taxon>
        <taxon>Gammaproteobacteria</taxon>
        <taxon>Enterobacterales</taxon>
        <taxon>Enterobacteriaceae</taxon>
        <taxon>Escherichia</taxon>
    </lineage>
</organism>
<feature type="chain" id="PRO_1000061297" description="UPF0225 protein YchJ">
    <location>
        <begin position="1"/>
        <end position="152"/>
    </location>
</feature>
<name>YCHJ_ECOHS</name>
<dbReference type="EMBL" id="CP000802">
    <property type="protein sequence ID" value="ABV05674.1"/>
    <property type="molecule type" value="Genomic_DNA"/>
</dbReference>
<dbReference type="RefSeq" id="WP_001362540.1">
    <property type="nucleotide sequence ID" value="NC_009800.1"/>
</dbReference>
<dbReference type="SMR" id="A7ZZH0"/>
<dbReference type="KEGG" id="ecx:EcHS_A1341"/>
<dbReference type="HOGENOM" id="CLU_099590_0_0_6"/>
<dbReference type="Gene3D" id="3.10.450.50">
    <property type="match status" value="1"/>
</dbReference>
<dbReference type="HAMAP" id="MF_00612">
    <property type="entry name" value="UPF0225"/>
    <property type="match status" value="1"/>
</dbReference>
<dbReference type="InterPro" id="IPR032710">
    <property type="entry name" value="NTF2-like_dom_sf"/>
</dbReference>
<dbReference type="InterPro" id="IPR004027">
    <property type="entry name" value="SEC_C_motif"/>
</dbReference>
<dbReference type="InterPro" id="IPR023006">
    <property type="entry name" value="UPF0225"/>
</dbReference>
<dbReference type="InterPro" id="IPR048469">
    <property type="entry name" value="YchJ-like_M"/>
</dbReference>
<dbReference type="NCBIfam" id="NF002449">
    <property type="entry name" value="PRK01617.1"/>
    <property type="match status" value="1"/>
</dbReference>
<dbReference type="NCBIfam" id="NF002486">
    <property type="entry name" value="PRK01752.1"/>
    <property type="match status" value="1"/>
</dbReference>
<dbReference type="PANTHER" id="PTHR33747:SF1">
    <property type="entry name" value="ADENYLATE CYCLASE-ASSOCIATED CAP C-TERMINAL DOMAIN-CONTAINING PROTEIN"/>
    <property type="match status" value="1"/>
</dbReference>
<dbReference type="PANTHER" id="PTHR33747">
    <property type="entry name" value="UPF0225 PROTEIN SCO1677"/>
    <property type="match status" value="1"/>
</dbReference>
<dbReference type="Pfam" id="PF02810">
    <property type="entry name" value="SEC-C"/>
    <property type="match status" value="2"/>
</dbReference>
<dbReference type="Pfam" id="PF17775">
    <property type="entry name" value="YchJ_M-like"/>
    <property type="match status" value="1"/>
</dbReference>
<dbReference type="SUPFAM" id="SSF54427">
    <property type="entry name" value="NTF2-like"/>
    <property type="match status" value="1"/>
</dbReference>
<dbReference type="SUPFAM" id="SSF103642">
    <property type="entry name" value="Sec-C motif"/>
    <property type="match status" value="1"/>
</dbReference>
<protein>
    <recommendedName>
        <fullName evidence="1">UPF0225 protein YchJ</fullName>
    </recommendedName>
</protein>
<comment type="similarity">
    <text evidence="1">Belongs to the UPF0225 family.</text>
</comment>
<accession>A7ZZH0</accession>
<gene>
    <name evidence="1" type="primary">ychJ</name>
    <name type="ordered locus">EcHS_A1341</name>
</gene>